<dbReference type="EC" id="2.7.8.7" evidence="1"/>
<dbReference type="EMBL" id="AJ235272">
    <property type="protein sequence ID" value="CAA15024.1"/>
    <property type="molecule type" value="Genomic_DNA"/>
</dbReference>
<dbReference type="PIR" id="F71662">
    <property type="entry name" value="F71662"/>
</dbReference>
<dbReference type="RefSeq" id="NP_220948.1">
    <property type="nucleotide sequence ID" value="NC_000963.1"/>
</dbReference>
<dbReference type="RefSeq" id="WP_004597890.1">
    <property type="nucleotide sequence ID" value="NC_000963.1"/>
</dbReference>
<dbReference type="SMR" id="Q9ZCX5"/>
<dbReference type="STRING" id="272947.gene:17555657"/>
<dbReference type="EnsemblBacteria" id="CAA15024">
    <property type="protein sequence ID" value="CAA15024"/>
    <property type="gene ID" value="CAA15024"/>
</dbReference>
<dbReference type="GeneID" id="57569703"/>
<dbReference type="KEGG" id="rpr:RP577"/>
<dbReference type="PATRIC" id="fig|272947.5.peg.594"/>
<dbReference type="eggNOG" id="COG0736">
    <property type="taxonomic scope" value="Bacteria"/>
</dbReference>
<dbReference type="HOGENOM" id="CLU_089696_1_2_5"/>
<dbReference type="OrthoDB" id="517356at2"/>
<dbReference type="Proteomes" id="UP000002480">
    <property type="component" value="Chromosome"/>
</dbReference>
<dbReference type="GO" id="GO:0005737">
    <property type="term" value="C:cytoplasm"/>
    <property type="evidence" value="ECO:0007669"/>
    <property type="project" value="UniProtKB-SubCell"/>
</dbReference>
<dbReference type="GO" id="GO:0008897">
    <property type="term" value="F:holo-[acyl-carrier-protein] synthase activity"/>
    <property type="evidence" value="ECO:0007669"/>
    <property type="project" value="UniProtKB-UniRule"/>
</dbReference>
<dbReference type="GO" id="GO:0000287">
    <property type="term" value="F:magnesium ion binding"/>
    <property type="evidence" value="ECO:0007669"/>
    <property type="project" value="UniProtKB-UniRule"/>
</dbReference>
<dbReference type="GO" id="GO:0006633">
    <property type="term" value="P:fatty acid biosynthetic process"/>
    <property type="evidence" value="ECO:0007669"/>
    <property type="project" value="UniProtKB-UniRule"/>
</dbReference>
<dbReference type="Gene3D" id="3.90.470.20">
    <property type="entry name" value="4'-phosphopantetheinyl transferase domain"/>
    <property type="match status" value="1"/>
</dbReference>
<dbReference type="HAMAP" id="MF_00101">
    <property type="entry name" value="AcpS"/>
    <property type="match status" value="1"/>
</dbReference>
<dbReference type="InterPro" id="IPR008278">
    <property type="entry name" value="4-PPantetheinyl_Trfase_dom"/>
</dbReference>
<dbReference type="InterPro" id="IPR037143">
    <property type="entry name" value="4-PPantetheinyl_Trfase_dom_sf"/>
</dbReference>
<dbReference type="InterPro" id="IPR002582">
    <property type="entry name" value="ACPS"/>
</dbReference>
<dbReference type="InterPro" id="IPR004568">
    <property type="entry name" value="Ppantetheine-prot_Trfase_dom"/>
</dbReference>
<dbReference type="NCBIfam" id="TIGR00516">
    <property type="entry name" value="acpS"/>
    <property type="match status" value="1"/>
</dbReference>
<dbReference type="NCBIfam" id="TIGR00556">
    <property type="entry name" value="pantethn_trn"/>
    <property type="match status" value="1"/>
</dbReference>
<dbReference type="Pfam" id="PF01648">
    <property type="entry name" value="ACPS"/>
    <property type="match status" value="1"/>
</dbReference>
<dbReference type="SUPFAM" id="SSF56214">
    <property type="entry name" value="4'-phosphopantetheinyl transferase"/>
    <property type="match status" value="1"/>
</dbReference>
<evidence type="ECO:0000255" key="1">
    <source>
        <dbReference type="HAMAP-Rule" id="MF_00101"/>
    </source>
</evidence>
<comment type="function">
    <text evidence="1">Transfers the 4'-phosphopantetheine moiety from coenzyme A to a Ser of acyl-carrier-protein.</text>
</comment>
<comment type="catalytic activity">
    <reaction evidence="1">
        <text>apo-[ACP] + CoA = holo-[ACP] + adenosine 3',5'-bisphosphate + H(+)</text>
        <dbReference type="Rhea" id="RHEA:12068"/>
        <dbReference type="Rhea" id="RHEA-COMP:9685"/>
        <dbReference type="Rhea" id="RHEA-COMP:9690"/>
        <dbReference type="ChEBI" id="CHEBI:15378"/>
        <dbReference type="ChEBI" id="CHEBI:29999"/>
        <dbReference type="ChEBI" id="CHEBI:57287"/>
        <dbReference type="ChEBI" id="CHEBI:58343"/>
        <dbReference type="ChEBI" id="CHEBI:64479"/>
        <dbReference type="EC" id="2.7.8.7"/>
    </reaction>
</comment>
<comment type="cofactor">
    <cofactor evidence="1">
        <name>Mg(2+)</name>
        <dbReference type="ChEBI" id="CHEBI:18420"/>
    </cofactor>
</comment>
<comment type="subcellular location">
    <subcellularLocation>
        <location evidence="1">Cytoplasm</location>
    </subcellularLocation>
</comment>
<comment type="similarity">
    <text evidence="1">Belongs to the P-Pant transferase superfamily. AcpS family.</text>
</comment>
<protein>
    <recommendedName>
        <fullName evidence="1">Holo-[acyl-carrier-protein] synthase</fullName>
        <shortName evidence="1">Holo-ACP synthase</shortName>
        <ecNumber evidence="1">2.7.8.7</ecNumber>
    </recommendedName>
    <alternativeName>
        <fullName evidence="1">4'-phosphopantetheinyl transferase AcpS</fullName>
    </alternativeName>
</protein>
<proteinExistence type="inferred from homology"/>
<sequence>MLIGVGTDIVQIPRIEKILNIYQELFAKKILALKELKQFTLLNKTNHATFLAKRFSAKEAVSKAFGVGIGRGINFKDITILNDNLGKPTVEISSHYTNKLAPFNIHLSLSDDYPICIAFAIIESNC</sequence>
<reference key="1">
    <citation type="journal article" date="1998" name="Nature">
        <title>The genome sequence of Rickettsia prowazekii and the origin of mitochondria.</title>
        <authorList>
            <person name="Andersson S.G.E."/>
            <person name="Zomorodipour A."/>
            <person name="Andersson J.O."/>
            <person name="Sicheritz-Ponten T."/>
            <person name="Alsmark U.C.M."/>
            <person name="Podowski R.M."/>
            <person name="Naeslund A.K."/>
            <person name="Eriksson A.-S."/>
            <person name="Winkler H.H."/>
            <person name="Kurland C.G."/>
        </authorList>
    </citation>
    <scope>NUCLEOTIDE SEQUENCE [LARGE SCALE GENOMIC DNA]</scope>
    <source>
        <strain>Madrid E</strain>
    </source>
</reference>
<name>ACPS_RICPR</name>
<gene>
    <name evidence="1" type="primary">acpS</name>
    <name type="ordered locus">RP577</name>
</gene>
<organism>
    <name type="scientific">Rickettsia prowazekii (strain Madrid E)</name>
    <dbReference type="NCBI Taxonomy" id="272947"/>
    <lineage>
        <taxon>Bacteria</taxon>
        <taxon>Pseudomonadati</taxon>
        <taxon>Pseudomonadota</taxon>
        <taxon>Alphaproteobacteria</taxon>
        <taxon>Rickettsiales</taxon>
        <taxon>Rickettsiaceae</taxon>
        <taxon>Rickettsieae</taxon>
        <taxon>Rickettsia</taxon>
        <taxon>typhus group</taxon>
    </lineage>
</organism>
<accession>Q9ZCX5</accession>
<feature type="chain" id="PRO_0000175693" description="Holo-[acyl-carrier-protein] synthase">
    <location>
        <begin position="1"/>
        <end position="126"/>
    </location>
</feature>
<feature type="binding site" evidence="1">
    <location>
        <position position="8"/>
    </location>
    <ligand>
        <name>Mg(2+)</name>
        <dbReference type="ChEBI" id="CHEBI:18420"/>
    </ligand>
</feature>
<feature type="binding site" evidence="1">
    <location>
        <position position="59"/>
    </location>
    <ligand>
        <name>Mg(2+)</name>
        <dbReference type="ChEBI" id="CHEBI:18420"/>
    </ligand>
</feature>
<keyword id="KW-0963">Cytoplasm</keyword>
<keyword id="KW-0275">Fatty acid biosynthesis</keyword>
<keyword id="KW-0276">Fatty acid metabolism</keyword>
<keyword id="KW-0444">Lipid biosynthesis</keyword>
<keyword id="KW-0443">Lipid metabolism</keyword>
<keyword id="KW-0460">Magnesium</keyword>
<keyword id="KW-0479">Metal-binding</keyword>
<keyword id="KW-1185">Reference proteome</keyword>
<keyword id="KW-0808">Transferase</keyword>